<sequence length="348" mass="36954">MRVLTIFLLFMTSIFAVQIKDVANTVGVRDNQLIGYGLVVGLNGSGDGTSSKFTLQSISNLLQGMNIKVDPNDIKSKNTAAVMVTAKLPAFAKSGDKLDITVSSMGDAKSLQGGTLLLTALRGIDGEIYAIAQGSISTGGLTPRPGGAGSHSTAATVMGGANVEREIPQNFSQNSDLTLSLKVADFKTANDIERVLNTVFGEEVAKAIDSRTVKLKKPEDLSNVDFMARVLEQDIAYKPQSKVIIDERTGTVIAGVDVEVEPVLITHKDITIKIDPNNNAVANQNEIDMKDGGFVDPSSNTLRINNAKSTVANIARMLNKLGATPNDIIAIMENLKRAGAINADLEII</sequence>
<feature type="signal peptide" evidence="1">
    <location>
        <begin position="1"/>
        <end position="16"/>
    </location>
</feature>
<feature type="chain" id="PRO_1000050107" description="Flagellar P-ring protein">
    <location>
        <begin position="17"/>
        <end position="348"/>
    </location>
</feature>
<organism>
    <name type="scientific">Campylobacter jejuni subsp. jejuni serotype O:23/36 (strain 81-176)</name>
    <dbReference type="NCBI Taxonomy" id="354242"/>
    <lineage>
        <taxon>Bacteria</taxon>
        <taxon>Pseudomonadati</taxon>
        <taxon>Campylobacterota</taxon>
        <taxon>Epsilonproteobacteria</taxon>
        <taxon>Campylobacterales</taxon>
        <taxon>Campylobacteraceae</taxon>
        <taxon>Campylobacter</taxon>
    </lineage>
</organism>
<protein>
    <recommendedName>
        <fullName evidence="1">Flagellar P-ring protein</fullName>
    </recommendedName>
    <alternativeName>
        <fullName evidence="1">Basal body P-ring protein</fullName>
    </alternativeName>
</protein>
<proteinExistence type="inferred from homology"/>
<keyword id="KW-0975">Bacterial flagellum</keyword>
<keyword id="KW-0574">Periplasm</keyword>
<keyword id="KW-0732">Signal</keyword>
<reference key="1">
    <citation type="submission" date="2006-12" db="EMBL/GenBank/DDBJ databases">
        <authorList>
            <person name="Fouts D.E."/>
            <person name="Nelson K.E."/>
            <person name="Sebastian Y."/>
        </authorList>
    </citation>
    <scope>NUCLEOTIDE SEQUENCE [LARGE SCALE GENOMIC DNA]</scope>
    <source>
        <strain>81-176</strain>
    </source>
</reference>
<accession>A1W170</accession>
<evidence type="ECO:0000255" key="1">
    <source>
        <dbReference type="HAMAP-Rule" id="MF_00416"/>
    </source>
</evidence>
<dbReference type="EMBL" id="CP000538">
    <property type="protein sequence ID" value="EAQ72887.1"/>
    <property type="molecule type" value="Genomic_DNA"/>
</dbReference>
<dbReference type="RefSeq" id="WP_002869192.1">
    <property type="nucleotide sequence ID" value="NC_008787.1"/>
</dbReference>
<dbReference type="SMR" id="A1W170"/>
<dbReference type="KEGG" id="cjj:CJJ81176_1455"/>
<dbReference type="eggNOG" id="COG1706">
    <property type="taxonomic scope" value="Bacteria"/>
</dbReference>
<dbReference type="HOGENOM" id="CLU_045235_1_0_7"/>
<dbReference type="Proteomes" id="UP000000646">
    <property type="component" value="Chromosome"/>
</dbReference>
<dbReference type="GO" id="GO:0009428">
    <property type="term" value="C:bacterial-type flagellum basal body, distal rod, P ring"/>
    <property type="evidence" value="ECO:0007669"/>
    <property type="project" value="InterPro"/>
</dbReference>
<dbReference type="GO" id="GO:0030288">
    <property type="term" value="C:outer membrane-bounded periplasmic space"/>
    <property type="evidence" value="ECO:0007669"/>
    <property type="project" value="InterPro"/>
</dbReference>
<dbReference type="GO" id="GO:0005198">
    <property type="term" value="F:structural molecule activity"/>
    <property type="evidence" value="ECO:0007669"/>
    <property type="project" value="InterPro"/>
</dbReference>
<dbReference type="GO" id="GO:0071973">
    <property type="term" value="P:bacterial-type flagellum-dependent cell motility"/>
    <property type="evidence" value="ECO:0007669"/>
    <property type="project" value="InterPro"/>
</dbReference>
<dbReference type="HAMAP" id="MF_00416">
    <property type="entry name" value="FlgI"/>
    <property type="match status" value="1"/>
</dbReference>
<dbReference type="InterPro" id="IPR001782">
    <property type="entry name" value="Flag_FlgI"/>
</dbReference>
<dbReference type="NCBIfam" id="NF003676">
    <property type="entry name" value="PRK05303.1"/>
    <property type="match status" value="1"/>
</dbReference>
<dbReference type="PANTHER" id="PTHR30381">
    <property type="entry name" value="FLAGELLAR P-RING PERIPLASMIC PROTEIN FLGI"/>
    <property type="match status" value="1"/>
</dbReference>
<dbReference type="PANTHER" id="PTHR30381:SF0">
    <property type="entry name" value="FLAGELLAR P-RING PROTEIN"/>
    <property type="match status" value="1"/>
</dbReference>
<dbReference type="Pfam" id="PF02119">
    <property type="entry name" value="FlgI"/>
    <property type="match status" value="1"/>
</dbReference>
<dbReference type="PRINTS" id="PR01010">
    <property type="entry name" value="FLGPRINGFLGI"/>
</dbReference>
<name>FLGI_CAMJJ</name>
<comment type="function">
    <text evidence="1">Assembles around the rod to form the L-ring and probably protects the motor/basal body from shearing forces during rotation.</text>
</comment>
<comment type="subunit">
    <text evidence="1">The basal body constitutes a major portion of the flagellar organelle and consists of four rings (L,P,S, and M) mounted on a central rod.</text>
</comment>
<comment type="subcellular location">
    <subcellularLocation>
        <location evidence="1">Periplasm</location>
    </subcellularLocation>
    <subcellularLocation>
        <location evidence="1">Bacterial flagellum basal body</location>
    </subcellularLocation>
</comment>
<comment type="similarity">
    <text evidence="1">Belongs to the FlgI family.</text>
</comment>
<gene>
    <name evidence="1" type="primary">flgI</name>
    <name type="ordered locus">CJJ81176_1455</name>
</gene>